<dbReference type="EC" id="2.1.1.-" evidence="2"/>
<dbReference type="EMBL" id="AABR03040398">
    <property type="status" value="NOT_ANNOTATED_CDS"/>
    <property type="molecule type" value="Genomic_DNA"/>
</dbReference>
<dbReference type="RefSeq" id="NP_001101374.1">
    <property type="nucleotide sequence ID" value="NM_001107904.1"/>
</dbReference>
<dbReference type="SMR" id="P85107"/>
<dbReference type="FunCoup" id="P85107">
    <property type="interactions" value="4054"/>
</dbReference>
<dbReference type="STRING" id="10116.ENSRNOP00000010783"/>
<dbReference type="iPTMnet" id="P85107"/>
<dbReference type="PhosphoSitePlus" id="P85107"/>
<dbReference type="PaxDb" id="10116-ENSRNOP00000010783"/>
<dbReference type="Ensembl" id="ENSRNOT00000010783.6">
    <property type="protein sequence ID" value="ENSRNOP00000010783.5"/>
    <property type="gene ID" value="ENSRNOG00000008156.6"/>
</dbReference>
<dbReference type="GeneID" id="312947"/>
<dbReference type="KEGG" id="rno:312947"/>
<dbReference type="UCSC" id="RGD:1309953">
    <property type="organism name" value="rat"/>
</dbReference>
<dbReference type="AGR" id="RGD:1309953"/>
<dbReference type="CTD" id="96764"/>
<dbReference type="RGD" id="1309953">
    <property type="gene designation" value="Tgs1"/>
</dbReference>
<dbReference type="eggNOG" id="KOG2730">
    <property type="taxonomic scope" value="Eukaryota"/>
</dbReference>
<dbReference type="GeneTree" id="ENSGT00390000018056"/>
<dbReference type="HOGENOM" id="CLU_016892_0_0_1"/>
<dbReference type="InParanoid" id="P85107"/>
<dbReference type="OMA" id="QSEPHNG"/>
<dbReference type="OrthoDB" id="194443at2759"/>
<dbReference type="PhylomeDB" id="P85107"/>
<dbReference type="TreeFam" id="TF313065"/>
<dbReference type="Reactome" id="R-RNO-191859">
    <property type="pathway name" value="snRNP Assembly"/>
</dbReference>
<dbReference type="Reactome" id="R-RNO-400206">
    <property type="pathway name" value="Regulation of lipid metabolism by PPARalpha"/>
</dbReference>
<dbReference type="Reactome" id="R-RNO-9707564">
    <property type="pathway name" value="Cytoprotection by HMOX1"/>
</dbReference>
<dbReference type="PRO" id="PR:P85107"/>
<dbReference type="Proteomes" id="UP000002494">
    <property type="component" value="Chromosome 5"/>
</dbReference>
<dbReference type="Bgee" id="ENSRNOG00000008156">
    <property type="expression patterns" value="Expressed in thymus and 19 other cell types or tissues"/>
</dbReference>
<dbReference type="GO" id="GO:0015030">
    <property type="term" value="C:Cajal body"/>
    <property type="evidence" value="ECO:0007669"/>
    <property type="project" value="UniProtKB-SubCell"/>
</dbReference>
<dbReference type="GO" id="GO:0005737">
    <property type="term" value="C:cytoplasm"/>
    <property type="evidence" value="ECO:0000266"/>
    <property type="project" value="RGD"/>
</dbReference>
<dbReference type="GO" id="GO:0005730">
    <property type="term" value="C:nucleolus"/>
    <property type="evidence" value="ECO:0007669"/>
    <property type="project" value="UniProtKB-SubCell"/>
</dbReference>
<dbReference type="GO" id="GO:0005634">
    <property type="term" value="C:nucleus"/>
    <property type="evidence" value="ECO:0000266"/>
    <property type="project" value="RGD"/>
</dbReference>
<dbReference type="GO" id="GO:0071164">
    <property type="term" value="F:RNA cap trimethylguanosine synthase activity"/>
    <property type="evidence" value="ECO:0000266"/>
    <property type="project" value="RGD"/>
</dbReference>
<dbReference type="GO" id="GO:0036261">
    <property type="term" value="P:7-methylguanosine cap hypermethylation"/>
    <property type="evidence" value="ECO:0000266"/>
    <property type="project" value="RGD"/>
</dbReference>
<dbReference type="CDD" id="cd02440">
    <property type="entry name" value="AdoMet_MTases"/>
    <property type="match status" value="1"/>
</dbReference>
<dbReference type="FunFam" id="3.40.50.150:FF:000066">
    <property type="entry name" value="Trimethylguanosine synthase 1"/>
    <property type="match status" value="1"/>
</dbReference>
<dbReference type="Gene3D" id="3.40.50.150">
    <property type="entry name" value="Vaccinia Virus protein VP39"/>
    <property type="match status" value="1"/>
</dbReference>
<dbReference type="InterPro" id="IPR019012">
    <property type="entry name" value="RNA_cap_Gua-N2-MeTrfase"/>
</dbReference>
<dbReference type="InterPro" id="IPR029063">
    <property type="entry name" value="SAM-dependent_MTases_sf"/>
</dbReference>
<dbReference type="PANTHER" id="PTHR14741">
    <property type="entry name" value="S-ADENOSYLMETHIONINE-DEPENDENT METHYLTRANSFERASE RELATED"/>
    <property type="match status" value="1"/>
</dbReference>
<dbReference type="PANTHER" id="PTHR14741:SF32">
    <property type="entry name" value="TRIMETHYLGUANOSINE SYNTHASE"/>
    <property type="match status" value="1"/>
</dbReference>
<dbReference type="Pfam" id="PF09445">
    <property type="entry name" value="Methyltransf_15"/>
    <property type="match status" value="1"/>
</dbReference>
<dbReference type="SUPFAM" id="SSF53335">
    <property type="entry name" value="S-adenosyl-L-methionine-dependent methyltransferases"/>
    <property type="match status" value="1"/>
</dbReference>
<organism>
    <name type="scientific">Rattus norvegicus</name>
    <name type="common">Rat</name>
    <dbReference type="NCBI Taxonomy" id="10116"/>
    <lineage>
        <taxon>Eukaryota</taxon>
        <taxon>Metazoa</taxon>
        <taxon>Chordata</taxon>
        <taxon>Craniata</taxon>
        <taxon>Vertebrata</taxon>
        <taxon>Euteleostomi</taxon>
        <taxon>Mammalia</taxon>
        <taxon>Eutheria</taxon>
        <taxon>Euarchontoglires</taxon>
        <taxon>Glires</taxon>
        <taxon>Rodentia</taxon>
        <taxon>Myomorpha</taxon>
        <taxon>Muroidea</taxon>
        <taxon>Muridae</taxon>
        <taxon>Murinae</taxon>
        <taxon>Rattus</taxon>
    </lineage>
</organism>
<protein>
    <recommendedName>
        <fullName>Trimethylguanosine synthase</fullName>
        <ecNumber evidence="2">2.1.1.-</ecNumber>
    </recommendedName>
    <alternativeName>
        <fullName>Cap-specific guanine-N(2) methyltransferase</fullName>
    </alternativeName>
    <alternativeName>
        <fullName>Nuclear receptor coactivator 6-interacting protein</fullName>
    </alternativeName>
    <alternativeName>
        <fullName>PRIP-interacting protein with methyltransferase motif</fullName>
        <shortName>PIMT</shortName>
        <shortName>PIPMT</shortName>
    </alternativeName>
</protein>
<keyword id="KW-0963">Cytoplasm</keyword>
<keyword id="KW-0489">Methyltransferase</keyword>
<keyword id="KW-0539">Nucleus</keyword>
<keyword id="KW-0597">Phosphoprotein</keyword>
<keyword id="KW-1185">Reference proteome</keyword>
<keyword id="KW-0949">S-adenosyl-L-methionine</keyword>
<keyword id="KW-0804">Transcription</keyword>
<keyword id="KW-0805">Transcription regulation</keyword>
<keyword id="KW-0808">Transferase</keyword>
<proteinExistence type="evidence at protein level"/>
<reference evidence="7" key="1">
    <citation type="journal article" date="2004" name="Nature">
        <title>Genome sequence of the Brown Norway rat yields insights into mammalian evolution.</title>
        <authorList>
            <person name="Gibbs R.A."/>
            <person name="Weinstock G.M."/>
            <person name="Metzker M.L."/>
            <person name="Muzny D.M."/>
            <person name="Sodergren E.J."/>
            <person name="Scherer S."/>
            <person name="Scott G."/>
            <person name="Steffen D."/>
            <person name="Worley K.C."/>
            <person name="Burch P.E."/>
            <person name="Okwuonu G."/>
            <person name="Hines S."/>
            <person name="Lewis L."/>
            <person name="Deramo C."/>
            <person name="Delgado O."/>
            <person name="Dugan-Rocha S."/>
            <person name="Miner G."/>
            <person name="Morgan M."/>
            <person name="Hawes A."/>
            <person name="Gill R."/>
            <person name="Holt R.A."/>
            <person name="Adams M.D."/>
            <person name="Amanatides P.G."/>
            <person name="Baden-Tillson H."/>
            <person name="Barnstead M."/>
            <person name="Chin S."/>
            <person name="Evans C.A."/>
            <person name="Ferriera S."/>
            <person name="Fosler C."/>
            <person name="Glodek A."/>
            <person name="Gu Z."/>
            <person name="Jennings D."/>
            <person name="Kraft C.L."/>
            <person name="Nguyen T."/>
            <person name="Pfannkoch C.M."/>
            <person name="Sitter C."/>
            <person name="Sutton G.G."/>
            <person name="Venter J.C."/>
            <person name="Woodage T."/>
            <person name="Smith D."/>
            <person name="Lee H.-M."/>
            <person name="Gustafson E."/>
            <person name="Cahill P."/>
            <person name="Kana A."/>
            <person name="Doucette-Stamm L."/>
            <person name="Weinstock K."/>
            <person name="Fechtel K."/>
            <person name="Weiss R.B."/>
            <person name="Dunn D.M."/>
            <person name="Green E.D."/>
            <person name="Blakesley R.W."/>
            <person name="Bouffard G.G."/>
            <person name="De Jong P.J."/>
            <person name="Osoegawa K."/>
            <person name="Zhu B."/>
            <person name="Marra M."/>
            <person name="Schein J."/>
            <person name="Bosdet I."/>
            <person name="Fjell C."/>
            <person name="Jones S."/>
            <person name="Krzywinski M."/>
            <person name="Mathewson C."/>
            <person name="Siddiqui A."/>
            <person name="Wye N."/>
            <person name="McPherson J."/>
            <person name="Zhao S."/>
            <person name="Fraser C.M."/>
            <person name="Shetty J."/>
            <person name="Shatsman S."/>
            <person name="Geer K."/>
            <person name="Chen Y."/>
            <person name="Abramzon S."/>
            <person name="Nierman W.C."/>
            <person name="Havlak P.H."/>
            <person name="Chen R."/>
            <person name="Durbin K.J."/>
            <person name="Egan A."/>
            <person name="Ren Y."/>
            <person name="Song X.-Z."/>
            <person name="Li B."/>
            <person name="Liu Y."/>
            <person name="Qin X."/>
            <person name="Cawley S."/>
            <person name="Cooney A.J."/>
            <person name="D'Souza L.M."/>
            <person name="Martin K."/>
            <person name="Wu J.Q."/>
            <person name="Gonzalez-Garay M.L."/>
            <person name="Jackson A.R."/>
            <person name="Kalafus K.J."/>
            <person name="McLeod M.P."/>
            <person name="Milosavljevic A."/>
            <person name="Virk D."/>
            <person name="Volkov A."/>
            <person name="Wheeler D.A."/>
            <person name="Zhang Z."/>
            <person name="Bailey J.A."/>
            <person name="Eichler E.E."/>
            <person name="Tuzun E."/>
            <person name="Birney E."/>
            <person name="Mongin E."/>
            <person name="Ureta-Vidal A."/>
            <person name="Woodwark C."/>
            <person name="Zdobnov E."/>
            <person name="Bork P."/>
            <person name="Suyama M."/>
            <person name="Torrents D."/>
            <person name="Alexandersson M."/>
            <person name="Trask B.J."/>
            <person name="Young J.M."/>
            <person name="Huang H."/>
            <person name="Wang H."/>
            <person name="Xing H."/>
            <person name="Daniels S."/>
            <person name="Gietzen D."/>
            <person name="Schmidt J."/>
            <person name="Stevens K."/>
            <person name="Vitt U."/>
            <person name="Wingrove J."/>
            <person name="Camara F."/>
            <person name="Mar Alba M."/>
            <person name="Abril J.F."/>
            <person name="Guigo R."/>
            <person name="Smit A."/>
            <person name="Dubchak I."/>
            <person name="Rubin E.M."/>
            <person name="Couronne O."/>
            <person name="Poliakov A."/>
            <person name="Huebner N."/>
            <person name="Ganten D."/>
            <person name="Goesele C."/>
            <person name="Hummel O."/>
            <person name="Kreitler T."/>
            <person name="Lee Y.-A."/>
            <person name="Monti J."/>
            <person name="Schulz H."/>
            <person name="Zimdahl H."/>
            <person name="Himmelbauer H."/>
            <person name="Lehrach H."/>
            <person name="Jacob H.J."/>
            <person name="Bromberg S."/>
            <person name="Gullings-Handley J."/>
            <person name="Jensen-Seaman M.I."/>
            <person name="Kwitek A.E."/>
            <person name="Lazar J."/>
            <person name="Pasko D."/>
            <person name="Tonellato P.J."/>
            <person name="Twigger S."/>
            <person name="Ponting C.P."/>
            <person name="Duarte J.M."/>
            <person name="Rice S."/>
            <person name="Goodstadt L."/>
            <person name="Beatson S.A."/>
            <person name="Emes R.D."/>
            <person name="Winter E.E."/>
            <person name="Webber C."/>
            <person name="Brandt P."/>
            <person name="Nyakatura G."/>
            <person name="Adetobi M."/>
            <person name="Chiaromonte F."/>
            <person name="Elnitski L."/>
            <person name="Eswara P."/>
            <person name="Hardison R.C."/>
            <person name="Hou M."/>
            <person name="Kolbe D."/>
            <person name="Makova K."/>
            <person name="Miller W."/>
            <person name="Nekrutenko A."/>
            <person name="Riemer C."/>
            <person name="Schwartz S."/>
            <person name="Taylor J."/>
            <person name="Yang S."/>
            <person name="Zhang Y."/>
            <person name="Lindpaintner K."/>
            <person name="Andrews T.D."/>
            <person name="Caccamo M."/>
            <person name="Clamp M."/>
            <person name="Clarke L."/>
            <person name="Curwen V."/>
            <person name="Durbin R.M."/>
            <person name="Eyras E."/>
            <person name="Searle S.M."/>
            <person name="Cooper G.M."/>
            <person name="Batzoglou S."/>
            <person name="Brudno M."/>
            <person name="Sidow A."/>
            <person name="Stone E.A."/>
            <person name="Payseur B.A."/>
            <person name="Bourque G."/>
            <person name="Lopez-Otin C."/>
            <person name="Puente X.S."/>
            <person name="Chakrabarti K."/>
            <person name="Chatterji S."/>
            <person name="Dewey C."/>
            <person name="Pachter L."/>
            <person name="Bray N."/>
            <person name="Yap V.B."/>
            <person name="Caspi A."/>
            <person name="Tesler G."/>
            <person name="Pevzner P.A."/>
            <person name="Haussler D."/>
            <person name="Roskin K.M."/>
            <person name="Baertsch R."/>
            <person name="Clawson H."/>
            <person name="Furey T.S."/>
            <person name="Hinrichs A.S."/>
            <person name="Karolchik D."/>
            <person name="Kent W.J."/>
            <person name="Rosenbloom K.R."/>
            <person name="Trumbower H."/>
            <person name="Weirauch M."/>
            <person name="Cooper D.N."/>
            <person name="Stenson P.D."/>
            <person name="Ma B."/>
            <person name="Brent M."/>
            <person name="Arumugam M."/>
            <person name="Shteynberg D."/>
            <person name="Copley R.R."/>
            <person name="Taylor M.S."/>
            <person name="Riethman H."/>
            <person name="Mudunuri U."/>
            <person name="Peterson J."/>
            <person name="Guyer M."/>
            <person name="Felsenfeld A."/>
            <person name="Old S."/>
            <person name="Mockrin S."/>
            <person name="Collins F.S."/>
        </authorList>
    </citation>
    <scope>NUCLEOTIDE SEQUENCE [LARGE SCALE GENOMIC DNA]</scope>
    <source>
        <strain evidence="6">Brown Norway</strain>
    </source>
</reference>
<reference evidence="7" key="2">
    <citation type="journal article" date="2003" name="Biochem. Biophys. Res. Commun.">
        <title>Different isoforms of PRIP-interacting protein with methyltransferase domain/trimethylguanosine synthase localize to the cytoplasm and nucleus.</title>
        <authorList>
            <person name="Enuenlue I."/>
            <person name="Papai G."/>
            <person name="Cserpan I."/>
            <person name="Udvardy A."/>
            <person name="Jeang K.-T."/>
            <person name="Boros I."/>
        </authorList>
    </citation>
    <scope>TISSUE SPECIFICITY</scope>
</reference>
<reference key="3">
    <citation type="journal article" date="2012" name="Nat. Commun.">
        <title>Quantitative maps of protein phosphorylation sites across 14 different rat organs and tissues.</title>
        <authorList>
            <person name="Lundby A."/>
            <person name="Secher A."/>
            <person name="Lage K."/>
            <person name="Nordsborg N.B."/>
            <person name="Dmytriyev A."/>
            <person name="Lundby C."/>
            <person name="Olsen J.V."/>
        </authorList>
    </citation>
    <scope>PHOSPHORYLATION [LARGE SCALE ANALYSIS] AT SER-431</scope>
    <scope>IDENTIFICATION BY MASS SPECTROMETRY [LARGE SCALE ANALYSIS]</scope>
</reference>
<feature type="chain" id="PRO_0000283727" description="Trimethylguanosine synthase">
    <location>
        <begin position="1"/>
        <end position="850"/>
    </location>
</feature>
<feature type="region of interest" description="Disordered" evidence="4">
    <location>
        <begin position="54"/>
        <end position="85"/>
    </location>
</feature>
<feature type="region of interest" description="Disordered" evidence="4">
    <location>
        <begin position="278"/>
        <end position="311"/>
    </location>
</feature>
<feature type="region of interest" description="Disordered" evidence="4">
    <location>
        <begin position="327"/>
        <end position="454"/>
    </location>
</feature>
<feature type="region of interest" description="Disordered" evidence="4">
    <location>
        <begin position="523"/>
        <end position="566"/>
    </location>
</feature>
<feature type="region of interest" description="Disordered" evidence="4">
    <location>
        <begin position="595"/>
        <end position="628"/>
    </location>
</feature>
<feature type="compositionally biased region" description="Basic and acidic residues" evidence="4">
    <location>
        <begin position="363"/>
        <end position="374"/>
    </location>
</feature>
<feature type="compositionally biased region" description="Polar residues" evidence="4">
    <location>
        <begin position="375"/>
        <end position="390"/>
    </location>
</feature>
<feature type="compositionally biased region" description="Acidic residues" evidence="4">
    <location>
        <begin position="424"/>
        <end position="435"/>
    </location>
</feature>
<feature type="compositionally biased region" description="Basic and acidic residues" evidence="4">
    <location>
        <begin position="548"/>
        <end position="562"/>
    </location>
</feature>
<feature type="compositionally biased region" description="Basic residues" evidence="4">
    <location>
        <begin position="611"/>
        <end position="624"/>
    </location>
</feature>
<feature type="binding site" evidence="1">
    <location>
        <position position="713"/>
    </location>
    <ligand>
        <name>S-adenosyl-L-methionine</name>
        <dbReference type="ChEBI" id="CHEBI:59789"/>
    </ligand>
</feature>
<feature type="modified residue" description="Phosphothreonine" evidence="2">
    <location>
        <position position="61"/>
    </location>
</feature>
<feature type="modified residue" description="Phosphoserine" evidence="2">
    <location>
        <position position="92"/>
    </location>
</feature>
<feature type="modified residue" description="Phosphoserine" evidence="2">
    <location>
        <position position="152"/>
    </location>
</feature>
<feature type="modified residue" description="Phosphoserine" evidence="2">
    <location>
        <position position="405"/>
    </location>
</feature>
<feature type="modified residue" description="Phosphoserine" evidence="9">
    <location>
        <position position="431"/>
    </location>
</feature>
<feature type="modified residue" description="Phosphoserine" evidence="2">
    <location>
        <position position="571"/>
    </location>
</feature>
<evidence type="ECO:0000250" key="1">
    <source>
        <dbReference type="UniProtKB" id="Q12052"/>
    </source>
</evidence>
<evidence type="ECO:0000250" key="2">
    <source>
        <dbReference type="UniProtKB" id="Q96RS0"/>
    </source>
</evidence>
<evidence type="ECO:0000255" key="3"/>
<evidence type="ECO:0000256" key="4">
    <source>
        <dbReference type="SAM" id="MobiDB-lite"/>
    </source>
</evidence>
<evidence type="ECO:0000269" key="5">
    <source>
    </source>
</evidence>
<evidence type="ECO:0000269" key="6">
    <source>
    </source>
</evidence>
<evidence type="ECO:0000305" key="7"/>
<evidence type="ECO:0000312" key="8">
    <source>
        <dbReference type="RGD" id="1309953"/>
    </source>
</evidence>
<evidence type="ECO:0007744" key="9">
    <source>
    </source>
</evidence>
<accession>P85107</accession>
<comment type="function">
    <text evidence="2">Catalyzes the 2 serial methylation steps for the conversion of the 7-monomethylguanosine (m(7)G) caps of snRNAs and snoRNAs to a 2,2,7-trimethylguanosine (m(2,2,7)G) cap structure. The enzyme is specific for guanine, and N7 methylation must precede N2 methylation. Hypermethylation of the m7G cap of U snRNAs leads to their concentration in nuclear foci, their colocalization with coilin and the formation of canonical Cajal bodies (CBs). Plays a role in transcriptional regulation (By similarity).</text>
</comment>
<comment type="catalytic activity">
    <reaction evidence="2">
        <text>a 5'-end (N(7)-methyl 5'-triphosphoguanosine)-ribonucleoside in snRNA + S-adenosyl-L-methionine = a 5'-end (N(2),N(7)-dimethyl 5'-triphosphoguanosine)-ribonucleoside in snRNA + S-adenosyl-L-homocysteine + H(+)</text>
        <dbReference type="Rhea" id="RHEA:78471"/>
        <dbReference type="Rhea" id="RHEA-COMP:19085"/>
        <dbReference type="Rhea" id="RHEA-COMP:19087"/>
        <dbReference type="ChEBI" id="CHEBI:15378"/>
        <dbReference type="ChEBI" id="CHEBI:57856"/>
        <dbReference type="ChEBI" id="CHEBI:59789"/>
        <dbReference type="ChEBI" id="CHEBI:156461"/>
        <dbReference type="ChEBI" id="CHEBI:172880"/>
    </reaction>
    <physiologicalReaction direction="left-to-right" evidence="2">
        <dbReference type="Rhea" id="RHEA:78472"/>
    </physiologicalReaction>
</comment>
<comment type="catalytic activity">
    <reaction evidence="2">
        <text>a 5'-end (N(7)-methyl 5'-triphosphoguanosine)-ribonucleoside in snoRNA + S-adenosyl-L-methionine = a 5'-end (N(2),N(7)-dimethyl 5'-triphosphoguanosine)-ribonucleoside in snoRNA + S-adenosyl-L-homocysteine + H(+)</text>
        <dbReference type="Rhea" id="RHEA:78475"/>
        <dbReference type="Rhea" id="RHEA-COMP:19086"/>
        <dbReference type="Rhea" id="RHEA-COMP:19088"/>
        <dbReference type="ChEBI" id="CHEBI:15378"/>
        <dbReference type="ChEBI" id="CHEBI:57856"/>
        <dbReference type="ChEBI" id="CHEBI:59789"/>
        <dbReference type="ChEBI" id="CHEBI:156461"/>
        <dbReference type="ChEBI" id="CHEBI:172880"/>
    </reaction>
    <physiologicalReaction direction="left-to-right" evidence="2">
        <dbReference type="Rhea" id="RHEA:78476"/>
    </physiologicalReaction>
</comment>
<comment type="catalytic activity">
    <reaction evidence="2">
        <text>a 5'-end (N(2),N(7)-dimethyl 5'-triphosphoguanosine)-ribonucleoside in snRNA + S-adenosyl-L-methionine = a 5'-end (N(2),N(2),N(7)-trimethyl 5'-triphosphoguanosine)-ribonucleoside in snRNA + S-adenosyl-L-homocysteine + H(+)</text>
        <dbReference type="Rhea" id="RHEA:78479"/>
        <dbReference type="Rhea" id="RHEA-COMP:19087"/>
        <dbReference type="Rhea" id="RHEA-COMP:19089"/>
        <dbReference type="ChEBI" id="CHEBI:15378"/>
        <dbReference type="ChEBI" id="CHEBI:57856"/>
        <dbReference type="ChEBI" id="CHEBI:59789"/>
        <dbReference type="ChEBI" id="CHEBI:167623"/>
        <dbReference type="ChEBI" id="CHEBI:172880"/>
    </reaction>
    <physiologicalReaction direction="left-to-right" evidence="2">
        <dbReference type="Rhea" id="RHEA:78480"/>
    </physiologicalReaction>
</comment>
<comment type="catalytic activity">
    <reaction evidence="2">
        <text>a 5'-end (N(2),N(7)-dimethyl 5'-triphosphoguanosine)-ribonucleoside in snoRNA + S-adenosyl-L-methionine = a 5'-end (N(2),N(2),N(7)-trimethyl 5'-triphosphoguanosine)-ribonucleoside in snoRNA + S-adenosyl-L-homocysteine + H(+)</text>
        <dbReference type="Rhea" id="RHEA:78507"/>
        <dbReference type="Rhea" id="RHEA-COMP:19088"/>
        <dbReference type="Rhea" id="RHEA-COMP:19090"/>
        <dbReference type="ChEBI" id="CHEBI:15378"/>
        <dbReference type="ChEBI" id="CHEBI:57856"/>
        <dbReference type="ChEBI" id="CHEBI:59789"/>
        <dbReference type="ChEBI" id="CHEBI:167623"/>
        <dbReference type="ChEBI" id="CHEBI:172880"/>
    </reaction>
    <physiologicalReaction direction="left-to-right" evidence="2">
        <dbReference type="Rhea" id="RHEA:78508"/>
    </physiologicalReaction>
</comment>
<comment type="subunit">
    <text evidence="2">May form homooligomers. Interacts with CREBBP/CBP, EED/WAIT1, EP300/P300, NCOA6/PRIP, PPARBP/PBP and SMN (By similarity).</text>
</comment>
<comment type="subcellular location">
    <subcellularLocation>
        <location evidence="2">Cytoplasm</location>
    </subcellularLocation>
    <subcellularLocation>
        <location evidence="2">Nucleus</location>
        <location evidence="2">Cajal body</location>
    </subcellularLocation>
    <subcellularLocation>
        <location evidence="2">Nucleus</location>
        <location evidence="2">Nucleolus</location>
    </subcellularLocation>
</comment>
<comment type="tissue specificity">
    <text evidence="5">A 55 kDa isoform is widely expressed while a 90 kDa isoform is detected exclusively in brain and testis (at protein level).</text>
</comment>
<comment type="similarity">
    <text evidence="3">Belongs to the methyltransferase superfamily. Trimethylguanosine synthase family.</text>
</comment>
<sequence>MCCEKWSHVAEMLLFIEDREEEYKILCLCSRAFVEDRKLYNLGLKGYYVKSSGNNAGDRVTEEEEDDHSSGTTESHSADEGDLDPEAKLMRSMGLPVRFGRMSTHGSFEVSMNARNKAKVRQKRRKHRKQYLDEIVREDWRNDCEEDDLVVSDDPSSVEHCENNSACEIQSKTDAEAENLPVENTLAPKLEVTENWEKYWNEYGEGLLWQSWQEKYPDQTLSSEPWNLPDTKEEWEQHYSQLYWYYLEQFQYWEAQGWTFVASQNCDKDVCTSHTQVDQNAESSLKADGTTLSSSPNTAEDESLGSNDNDHNEIIAGINKITLSAEEVEQSQLDSSEHCDKPLSEVTGKECPASGGSDSCHGTPKESDISENRSSDQPAQELQESSGTNTSKHRPHHNGTDGNESEDDPPDHKPSKMKRSHELDIDENPDSEVDDNGFHLGFKHGSGQKYGGIPNFSRRQVRYLEKNVKYKSKYLDMRKRMTVKNKHIVFSEESGKPFIRKSKVRSKVEKFLKWVNEPVDEEISQEPLSHNKMQDTCTSSDSEEQDMSMEKTDGLMETRDPEPENCQTISSASELEAEKSEGGSLVAAVPENCSTEGVANSPRAEAEVEIKKKKKKKKKNKNKKINGLPPEIASVPELAKYWAQRYRLFSRFDDGIKLDKEGWFSVTPEKIAEHIAGRVSQSFNCDIIVDAFCGVGGNTIQFALTGKRVIAIDIDPVKIDLARNNAEVYGVADKIEFICGDFLLLAPCLKADVVFLSPPWGGPDYATAETFDIRTMMSPDGFEIFRLSQKITNNIVYFLPRNADVDQVASLAGPGGQVEIEQNFLNNKLKTITAYFGDLIRRPALRSAEA</sequence>
<gene>
    <name evidence="2" type="primary">Tgs1</name>
    <name evidence="8" type="synonym">Ncoa6ip</name>
    <name evidence="2" type="synonym">Pimt</name>
</gene>
<name>TGS1_RAT</name>